<comment type="function">
    <text evidence="1">Cell wall formation.</text>
</comment>
<comment type="catalytic activity">
    <reaction evidence="1">
        <text>UDP-N-acetyl-alpha-D-muramate + L-alanine + ATP = UDP-N-acetyl-alpha-D-muramoyl-L-alanine + ADP + phosphate + H(+)</text>
        <dbReference type="Rhea" id="RHEA:23372"/>
        <dbReference type="ChEBI" id="CHEBI:15378"/>
        <dbReference type="ChEBI" id="CHEBI:30616"/>
        <dbReference type="ChEBI" id="CHEBI:43474"/>
        <dbReference type="ChEBI" id="CHEBI:57972"/>
        <dbReference type="ChEBI" id="CHEBI:70757"/>
        <dbReference type="ChEBI" id="CHEBI:83898"/>
        <dbReference type="ChEBI" id="CHEBI:456216"/>
        <dbReference type="EC" id="6.3.2.8"/>
    </reaction>
</comment>
<comment type="pathway">
    <text evidence="1">Cell wall biogenesis; peptidoglycan biosynthesis.</text>
</comment>
<comment type="subcellular location">
    <subcellularLocation>
        <location evidence="1">Cytoplasm</location>
    </subcellularLocation>
</comment>
<comment type="similarity">
    <text evidence="1">Belongs to the MurCDEF family.</text>
</comment>
<evidence type="ECO:0000255" key="1">
    <source>
        <dbReference type="HAMAP-Rule" id="MF_00046"/>
    </source>
</evidence>
<keyword id="KW-0067">ATP-binding</keyword>
<keyword id="KW-0131">Cell cycle</keyword>
<keyword id="KW-0132">Cell division</keyword>
<keyword id="KW-0133">Cell shape</keyword>
<keyword id="KW-0961">Cell wall biogenesis/degradation</keyword>
<keyword id="KW-0963">Cytoplasm</keyword>
<keyword id="KW-0436">Ligase</keyword>
<keyword id="KW-0547">Nucleotide-binding</keyword>
<keyword id="KW-0573">Peptidoglycan synthesis</keyword>
<keyword id="KW-1185">Reference proteome</keyword>
<dbReference type="EC" id="6.3.2.8" evidence="1"/>
<dbReference type="EMBL" id="AE017180">
    <property type="protein sequence ID" value="AAR36460.1"/>
    <property type="molecule type" value="Genomic_DNA"/>
</dbReference>
<dbReference type="RefSeq" id="NP_954110.1">
    <property type="nucleotide sequence ID" value="NC_002939.5"/>
</dbReference>
<dbReference type="RefSeq" id="WP_010943693.1">
    <property type="nucleotide sequence ID" value="NC_002939.5"/>
</dbReference>
<dbReference type="SMR" id="P61679"/>
<dbReference type="FunCoup" id="P61679">
    <property type="interactions" value="345"/>
</dbReference>
<dbReference type="STRING" id="243231.GSU3068"/>
<dbReference type="EnsemblBacteria" id="AAR36460">
    <property type="protein sequence ID" value="AAR36460"/>
    <property type="gene ID" value="GSU3068"/>
</dbReference>
<dbReference type="KEGG" id="gsu:GSU3068"/>
<dbReference type="PATRIC" id="fig|243231.5.peg.3091"/>
<dbReference type="eggNOG" id="COG0773">
    <property type="taxonomic scope" value="Bacteria"/>
</dbReference>
<dbReference type="HOGENOM" id="CLU_028104_2_2_7"/>
<dbReference type="InParanoid" id="P61679"/>
<dbReference type="OrthoDB" id="9804126at2"/>
<dbReference type="UniPathway" id="UPA00219"/>
<dbReference type="Proteomes" id="UP000000577">
    <property type="component" value="Chromosome"/>
</dbReference>
<dbReference type="GO" id="GO:0005737">
    <property type="term" value="C:cytoplasm"/>
    <property type="evidence" value="ECO:0007669"/>
    <property type="project" value="UniProtKB-SubCell"/>
</dbReference>
<dbReference type="GO" id="GO:0005524">
    <property type="term" value="F:ATP binding"/>
    <property type="evidence" value="ECO:0007669"/>
    <property type="project" value="UniProtKB-UniRule"/>
</dbReference>
<dbReference type="GO" id="GO:0008763">
    <property type="term" value="F:UDP-N-acetylmuramate-L-alanine ligase activity"/>
    <property type="evidence" value="ECO:0007669"/>
    <property type="project" value="UniProtKB-UniRule"/>
</dbReference>
<dbReference type="GO" id="GO:0051301">
    <property type="term" value="P:cell division"/>
    <property type="evidence" value="ECO:0007669"/>
    <property type="project" value="UniProtKB-KW"/>
</dbReference>
<dbReference type="GO" id="GO:0071555">
    <property type="term" value="P:cell wall organization"/>
    <property type="evidence" value="ECO:0007669"/>
    <property type="project" value="UniProtKB-KW"/>
</dbReference>
<dbReference type="GO" id="GO:0009252">
    <property type="term" value="P:peptidoglycan biosynthetic process"/>
    <property type="evidence" value="ECO:0007669"/>
    <property type="project" value="UniProtKB-UniRule"/>
</dbReference>
<dbReference type="GO" id="GO:0008360">
    <property type="term" value="P:regulation of cell shape"/>
    <property type="evidence" value="ECO:0007669"/>
    <property type="project" value="UniProtKB-KW"/>
</dbReference>
<dbReference type="Gene3D" id="3.90.190.20">
    <property type="entry name" value="Mur ligase, C-terminal domain"/>
    <property type="match status" value="1"/>
</dbReference>
<dbReference type="Gene3D" id="3.40.1190.10">
    <property type="entry name" value="Mur-like, catalytic domain"/>
    <property type="match status" value="1"/>
</dbReference>
<dbReference type="Gene3D" id="3.40.50.720">
    <property type="entry name" value="NAD(P)-binding Rossmann-like Domain"/>
    <property type="match status" value="1"/>
</dbReference>
<dbReference type="HAMAP" id="MF_00046">
    <property type="entry name" value="MurC"/>
    <property type="match status" value="1"/>
</dbReference>
<dbReference type="InterPro" id="IPR036565">
    <property type="entry name" value="Mur-like_cat_sf"/>
</dbReference>
<dbReference type="InterPro" id="IPR004101">
    <property type="entry name" value="Mur_ligase_C"/>
</dbReference>
<dbReference type="InterPro" id="IPR036615">
    <property type="entry name" value="Mur_ligase_C_dom_sf"/>
</dbReference>
<dbReference type="InterPro" id="IPR013221">
    <property type="entry name" value="Mur_ligase_cen"/>
</dbReference>
<dbReference type="InterPro" id="IPR000713">
    <property type="entry name" value="Mur_ligase_N"/>
</dbReference>
<dbReference type="InterPro" id="IPR050061">
    <property type="entry name" value="MurCDEF_pg_biosynth"/>
</dbReference>
<dbReference type="InterPro" id="IPR005758">
    <property type="entry name" value="UDP-N-AcMur_Ala_ligase_MurC"/>
</dbReference>
<dbReference type="NCBIfam" id="TIGR01082">
    <property type="entry name" value="murC"/>
    <property type="match status" value="1"/>
</dbReference>
<dbReference type="PANTHER" id="PTHR43445:SF3">
    <property type="entry name" value="UDP-N-ACETYLMURAMATE--L-ALANINE LIGASE"/>
    <property type="match status" value="1"/>
</dbReference>
<dbReference type="PANTHER" id="PTHR43445">
    <property type="entry name" value="UDP-N-ACETYLMURAMATE--L-ALANINE LIGASE-RELATED"/>
    <property type="match status" value="1"/>
</dbReference>
<dbReference type="Pfam" id="PF01225">
    <property type="entry name" value="Mur_ligase"/>
    <property type="match status" value="1"/>
</dbReference>
<dbReference type="Pfam" id="PF02875">
    <property type="entry name" value="Mur_ligase_C"/>
    <property type="match status" value="1"/>
</dbReference>
<dbReference type="Pfam" id="PF08245">
    <property type="entry name" value="Mur_ligase_M"/>
    <property type="match status" value="1"/>
</dbReference>
<dbReference type="SUPFAM" id="SSF51984">
    <property type="entry name" value="MurCD N-terminal domain"/>
    <property type="match status" value="1"/>
</dbReference>
<dbReference type="SUPFAM" id="SSF53623">
    <property type="entry name" value="MurD-like peptide ligases, catalytic domain"/>
    <property type="match status" value="1"/>
</dbReference>
<dbReference type="SUPFAM" id="SSF53244">
    <property type="entry name" value="MurD-like peptide ligases, peptide-binding domain"/>
    <property type="match status" value="1"/>
</dbReference>
<feature type="chain" id="PRO_0000182097" description="UDP-N-acetylmuramate--L-alanine ligase">
    <location>
        <begin position="1"/>
        <end position="462"/>
    </location>
</feature>
<feature type="binding site" evidence="1">
    <location>
        <begin position="112"/>
        <end position="118"/>
    </location>
    <ligand>
        <name>ATP</name>
        <dbReference type="ChEBI" id="CHEBI:30616"/>
    </ligand>
</feature>
<protein>
    <recommendedName>
        <fullName evidence="1">UDP-N-acetylmuramate--L-alanine ligase</fullName>
        <ecNumber evidence="1">6.3.2.8</ecNumber>
    </recommendedName>
    <alternativeName>
        <fullName evidence="1">UDP-N-acetylmuramoyl-L-alanine synthetase</fullName>
    </alternativeName>
</protein>
<proteinExistence type="inferred from homology"/>
<reference key="1">
    <citation type="journal article" date="2003" name="Science">
        <title>Genome of Geobacter sulfurreducens: metal reduction in subsurface environments.</title>
        <authorList>
            <person name="Methe B.A."/>
            <person name="Nelson K.E."/>
            <person name="Eisen J.A."/>
            <person name="Paulsen I.T."/>
            <person name="Nelson W.C."/>
            <person name="Heidelberg J.F."/>
            <person name="Wu D."/>
            <person name="Wu M."/>
            <person name="Ward N.L."/>
            <person name="Beanan M.J."/>
            <person name="Dodson R.J."/>
            <person name="Madupu R."/>
            <person name="Brinkac L.M."/>
            <person name="Daugherty S.C."/>
            <person name="DeBoy R.T."/>
            <person name="Durkin A.S."/>
            <person name="Gwinn M.L."/>
            <person name="Kolonay J.F."/>
            <person name="Sullivan S.A."/>
            <person name="Haft D.H."/>
            <person name="Selengut J."/>
            <person name="Davidsen T.M."/>
            <person name="Zafar N."/>
            <person name="White O."/>
            <person name="Tran B."/>
            <person name="Romero C."/>
            <person name="Forberger H.A."/>
            <person name="Weidman J.F."/>
            <person name="Khouri H.M."/>
            <person name="Feldblyum T.V."/>
            <person name="Utterback T.R."/>
            <person name="Van Aken S.E."/>
            <person name="Lovley D.R."/>
            <person name="Fraser C.M."/>
        </authorList>
    </citation>
    <scope>NUCLEOTIDE SEQUENCE [LARGE SCALE GENOMIC DNA]</scope>
    <source>
        <strain>ATCC 51573 / DSM 12127 / PCA</strain>
    </source>
</reference>
<accession>P61679</accession>
<gene>
    <name evidence="1" type="primary">murC</name>
    <name type="ordered locus">GSU3068</name>
</gene>
<organism>
    <name type="scientific">Geobacter sulfurreducens (strain ATCC 51573 / DSM 12127 / PCA)</name>
    <dbReference type="NCBI Taxonomy" id="243231"/>
    <lineage>
        <taxon>Bacteria</taxon>
        <taxon>Pseudomonadati</taxon>
        <taxon>Thermodesulfobacteriota</taxon>
        <taxon>Desulfuromonadia</taxon>
        <taxon>Geobacterales</taxon>
        <taxon>Geobacteraceae</taxon>
        <taxon>Geobacter</taxon>
    </lineage>
</organism>
<name>MURC_GEOSL</name>
<sequence>MYGKIEKIHFVGIGGIGMSGIAEVLLNLGYKVSGSDLKQSDTTDRLASLGGEIRFGHGRENVADVDVVVTSTAVRDDNPEVVEAKRRMIPVIPRAEMLAELMRMKYGIAIAGTHGKTTTTSMVATVLTHGGIDPTIVIGGKLNTLGTNAKLGQGQFLVAEADESDGSFLKLSPTIAVVTNIDADHLDFYTGGIEQIKDTFVDFINKIPFYGLAVLCLEDRNIAEILPRVKKRFVTYGLSSQADIRATHIRLEGGTTSFVAHYKGYRMGEVSFSMPGAHNVLNALACIAVAMELDVPFSQIQEGFATFGGVGRRFQVKGEVNGITVVDDYGHHPAEIRATLAAGKSGWPERRLVVAFQPHRFSRTRELFAEFVTCFYDADVLVLTDIYPAGEAPIEGVSAERLAEEIRKHGQRDVTYVADREALPEHLLTIVQPGDIVLTLGAGNIWQSGEAFLAKLEEARQA</sequence>